<comment type="interaction">
    <interactant intactId="EBI-10241319">
        <id>Q3SYA9</id>
    </interactant>
    <interactant intactId="EBI-359224">
        <id>Q13077</id>
        <label>TRAF1</label>
    </interactant>
    <organismsDiffer>false</organismsDiffer>
    <experiments>3</experiments>
</comment>
<comment type="interaction">
    <interactant intactId="EBI-10241319">
        <id>Q3SYA9</id>
    </interactant>
    <interactant intactId="EBI-742327">
        <id>Q15654</id>
        <label>TRIP6</label>
    </interactant>
    <organismsDiffer>false</organismsDiffer>
    <experiments>3</experiments>
</comment>
<comment type="similarity">
    <text evidence="2">Belongs to the POM121 family.</text>
</comment>
<comment type="caution">
    <text evidence="2">Could be the product of a pseudogene.</text>
</comment>
<organism>
    <name type="scientific">Homo sapiens</name>
    <name type="common">Human</name>
    <dbReference type="NCBI Taxonomy" id="9606"/>
    <lineage>
        <taxon>Eukaryota</taxon>
        <taxon>Metazoa</taxon>
        <taxon>Chordata</taxon>
        <taxon>Craniata</taxon>
        <taxon>Vertebrata</taxon>
        <taxon>Euteleostomi</taxon>
        <taxon>Mammalia</taxon>
        <taxon>Eutheria</taxon>
        <taxon>Euarchontoglires</taxon>
        <taxon>Primates</taxon>
        <taxon>Haplorrhini</taxon>
        <taxon>Catarrhini</taxon>
        <taxon>Hominidae</taxon>
        <taxon>Homo</taxon>
    </lineage>
</organism>
<sequence>MDSLWGPGAGSHPFGVHNSRLSPDLCPGKIVLRALKESGAGMPEQDKDPRVQENPGDQRRVPEVTGDAPSAFRPLRDNGGLSPFVPGPGPLQTDLHAQRSEIRYNQTSQTSWTSSCTNRNAISSSYSSTGGLPGLKRRRGPASSHCQLTLSSSKTVSEDRPQAVSSGHTQCEKVAEIAPGQTLALRNDSSRSEASRPSTRKFPLLPRRRGEPLMLPPPVELGYRVTAEDLDWEKEAAFQCIKSALQVEDKAISDCRPSRPSHTLSSLATGASGLPAVSKAPSMDAQQERHKSQDCLGLVAPLASATEVPSTAPMSGEKHRPPGPLFSSSDPLPATSSHSQDSAQVTSLIPAPFPAASMDAGMRRTRPGTSAPAAAAAAPPPSTLNRTLGSLLEWMEALHISGPQPQLQQVPRGQNQRSQTSRTSSCPK</sequence>
<evidence type="ECO:0000256" key="1">
    <source>
        <dbReference type="SAM" id="MobiDB-lite"/>
    </source>
</evidence>
<evidence type="ECO:0000305" key="2"/>
<name>P12L1_HUMAN</name>
<protein>
    <recommendedName>
        <fullName>Putative POM121-like protein 1</fullName>
    </recommendedName>
</protein>
<proteinExistence type="uncertain"/>
<accession>Q3SYA9</accession>
<keyword id="KW-1185">Reference proteome</keyword>
<dbReference type="EMBL" id="AC007050">
    <property type="status" value="NOT_ANNOTATED_CDS"/>
    <property type="molecule type" value="Genomic_DNA"/>
</dbReference>
<dbReference type="EMBL" id="BC103891">
    <property type="status" value="NOT_ANNOTATED_CDS"/>
    <property type="molecule type" value="mRNA"/>
</dbReference>
<dbReference type="SMR" id="Q3SYA9"/>
<dbReference type="IntAct" id="Q3SYA9">
    <property type="interactions" value="2"/>
</dbReference>
<dbReference type="STRING" id="9606.ENSP00000481613"/>
<dbReference type="GlyGen" id="Q3SYA9">
    <property type="glycosylation" value="1 site, 1 O-linked glycan (1 site)"/>
</dbReference>
<dbReference type="iPTMnet" id="Q3SYA9"/>
<dbReference type="PhosphoSitePlus" id="Q3SYA9"/>
<dbReference type="BioMuta" id="HGNC:16439"/>
<dbReference type="DMDM" id="150385310"/>
<dbReference type="MassIVE" id="Q3SYA9"/>
<dbReference type="PaxDb" id="9606-ENSP00000481613"/>
<dbReference type="PeptideAtlas" id="Q3SYA9"/>
<dbReference type="AGR" id="HGNC:16439"/>
<dbReference type="AGR" id="HGNC:19326"/>
<dbReference type="GeneCards" id="POM121L1P"/>
<dbReference type="HGNC" id="HGNC:16439">
    <property type="gene designation" value="POM121L1P"/>
</dbReference>
<dbReference type="neXtProt" id="NX_Q3SYA9"/>
<dbReference type="eggNOG" id="ENOG502RU3H">
    <property type="taxonomic scope" value="Eukaryota"/>
</dbReference>
<dbReference type="InParanoid" id="Q3SYA9"/>
<dbReference type="PAN-GO" id="Q3SYA9">
    <property type="GO annotations" value="0 GO annotations based on evolutionary models"/>
</dbReference>
<dbReference type="PhylomeDB" id="Q3SYA9"/>
<dbReference type="PathwayCommons" id="Q3SYA9"/>
<dbReference type="SignaLink" id="Q3SYA9"/>
<dbReference type="Pharos" id="Q3SYA9">
    <property type="development level" value="Tdark"/>
</dbReference>
<dbReference type="PRO" id="PR:Q3SYA9"/>
<dbReference type="Proteomes" id="UP000005640">
    <property type="component" value="Unplaced"/>
</dbReference>
<dbReference type="RNAct" id="Q3SYA9">
    <property type="molecule type" value="protein"/>
</dbReference>
<dbReference type="InterPro" id="IPR043220">
    <property type="entry name" value="POM121-like_prot_1"/>
</dbReference>
<dbReference type="PANTHER" id="PTHR15566">
    <property type="entry name" value="POM121-LIKE"/>
    <property type="match status" value="1"/>
</dbReference>
<dbReference type="PANTHER" id="PTHR15566:SF6">
    <property type="entry name" value="POM121-LIKE PROTEIN 1-RELATED"/>
    <property type="match status" value="1"/>
</dbReference>
<dbReference type="Pfam" id="PF15229">
    <property type="entry name" value="POM121"/>
    <property type="match status" value="1"/>
</dbReference>
<reference key="1">
    <citation type="journal article" date="1999" name="Nature">
        <title>The DNA sequence of human chromosome 22.</title>
        <authorList>
            <person name="Dunham I."/>
            <person name="Hunt A.R."/>
            <person name="Collins J.E."/>
            <person name="Bruskiewich R."/>
            <person name="Beare D.M."/>
            <person name="Clamp M."/>
            <person name="Smink L.J."/>
            <person name="Ainscough R."/>
            <person name="Almeida J.P."/>
            <person name="Babbage A.K."/>
            <person name="Bagguley C."/>
            <person name="Bailey J."/>
            <person name="Barlow K.F."/>
            <person name="Bates K.N."/>
            <person name="Beasley O.P."/>
            <person name="Bird C.P."/>
            <person name="Blakey S.E."/>
            <person name="Bridgeman A.M."/>
            <person name="Buck D."/>
            <person name="Burgess J."/>
            <person name="Burrill W.D."/>
            <person name="Burton J."/>
            <person name="Carder C."/>
            <person name="Carter N.P."/>
            <person name="Chen Y."/>
            <person name="Clark G."/>
            <person name="Clegg S.M."/>
            <person name="Cobley V.E."/>
            <person name="Cole C.G."/>
            <person name="Collier R.E."/>
            <person name="Connor R."/>
            <person name="Conroy D."/>
            <person name="Corby N.R."/>
            <person name="Coville G.J."/>
            <person name="Cox A.V."/>
            <person name="Davis J."/>
            <person name="Dawson E."/>
            <person name="Dhami P.D."/>
            <person name="Dockree C."/>
            <person name="Dodsworth S.J."/>
            <person name="Durbin R.M."/>
            <person name="Ellington A.G."/>
            <person name="Evans K.L."/>
            <person name="Fey J.M."/>
            <person name="Fleming K."/>
            <person name="French L."/>
            <person name="Garner A.A."/>
            <person name="Gilbert J.G.R."/>
            <person name="Goward M.E."/>
            <person name="Grafham D.V."/>
            <person name="Griffiths M.N.D."/>
            <person name="Hall C."/>
            <person name="Hall R.E."/>
            <person name="Hall-Tamlyn G."/>
            <person name="Heathcott R.W."/>
            <person name="Ho S."/>
            <person name="Holmes S."/>
            <person name="Hunt S.E."/>
            <person name="Jones M.C."/>
            <person name="Kershaw J."/>
            <person name="Kimberley A.M."/>
            <person name="King A."/>
            <person name="Laird G.K."/>
            <person name="Langford C.F."/>
            <person name="Leversha M.A."/>
            <person name="Lloyd C."/>
            <person name="Lloyd D.M."/>
            <person name="Martyn I.D."/>
            <person name="Mashreghi-Mohammadi M."/>
            <person name="Matthews L.H."/>
            <person name="Mccann O.T."/>
            <person name="Mcclay J."/>
            <person name="Mclaren S."/>
            <person name="McMurray A.A."/>
            <person name="Milne S.A."/>
            <person name="Mortimore B.J."/>
            <person name="Odell C.N."/>
            <person name="Pavitt R."/>
            <person name="Pearce A.V."/>
            <person name="Pearson D."/>
            <person name="Phillimore B.J.C.T."/>
            <person name="Phillips S.H."/>
            <person name="Plumb R.W."/>
            <person name="Ramsay H."/>
            <person name="Ramsey Y."/>
            <person name="Rogers L."/>
            <person name="Ross M.T."/>
            <person name="Scott C.E."/>
            <person name="Sehra H.K."/>
            <person name="Skuce C.D."/>
            <person name="Smalley S."/>
            <person name="Smith M.L."/>
            <person name="Soderlund C."/>
            <person name="Spragon L."/>
            <person name="Steward C.A."/>
            <person name="Sulston J.E."/>
            <person name="Swann R.M."/>
            <person name="Vaudin M."/>
            <person name="Wall M."/>
            <person name="Wallis J.M."/>
            <person name="Whiteley M.N."/>
            <person name="Willey D.L."/>
            <person name="Williams L."/>
            <person name="Williams S.A."/>
            <person name="Williamson H."/>
            <person name="Wilmer T.E."/>
            <person name="Wilming L."/>
            <person name="Wright C.L."/>
            <person name="Hubbard T."/>
            <person name="Bentley D.R."/>
            <person name="Beck S."/>
            <person name="Rogers J."/>
            <person name="Shimizu N."/>
            <person name="Minoshima S."/>
            <person name="Kawasaki K."/>
            <person name="Sasaki T."/>
            <person name="Asakawa S."/>
            <person name="Kudoh J."/>
            <person name="Shintani A."/>
            <person name="Shibuya K."/>
            <person name="Yoshizaki Y."/>
            <person name="Aoki N."/>
            <person name="Mitsuyama S."/>
            <person name="Roe B.A."/>
            <person name="Chen F."/>
            <person name="Chu L."/>
            <person name="Crabtree J."/>
            <person name="Deschamps S."/>
            <person name="Do A."/>
            <person name="Do T."/>
            <person name="Dorman A."/>
            <person name="Fang F."/>
            <person name="Fu Y."/>
            <person name="Hu P."/>
            <person name="Hua A."/>
            <person name="Kenton S."/>
            <person name="Lai H."/>
            <person name="Lao H.I."/>
            <person name="Lewis J."/>
            <person name="Lewis S."/>
            <person name="Lin S.-P."/>
            <person name="Loh P."/>
            <person name="Malaj E."/>
            <person name="Nguyen T."/>
            <person name="Pan H."/>
            <person name="Phan S."/>
            <person name="Qi S."/>
            <person name="Qian Y."/>
            <person name="Ray L."/>
            <person name="Ren Q."/>
            <person name="Shaull S."/>
            <person name="Sloan D."/>
            <person name="Song L."/>
            <person name="Wang Q."/>
            <person name="Wang Y."/>
            <person name="Wang Z."/>
            <person name="White J."/>
            <person name="Willingham D."/>
            <person name="Wu H."/>
            <person name="Yao Z."/>
            <person name="Zhan M."/>
            <person name="Zhang G."/>
            <person name="Chissoe S."/>
            <person name="Murray J."/>
            <person name="Miller N."/>
            <person name="Minx P."/>
            <person name="Fulton R."/>
            <person name="Johnson D."/>
            <person name="Bemis G."/>
            <person name="Bentley D."/>
            <person name="Bradshaw H."/>
            <person name="Bourne S."/>
            <person name="Cordes M."/>
            <person name="Du Z."/>
            <person name="Fulton L."/>
            <person name="Goela D."/>
            <person name="Graves T."/>
            <person name="Hawkins J."/>
            <person name="Hinds K."/>
            <person name="Kemp K."/>
            <person name="Latreille P."/>
            <person name="Layman D."/>
            <person name="Ozersky P."/>
            <person name="Rohlfing T."/>
            <person name="Scheet P."/>
            <person name="Walker C."/>
            <person name="Wamsley A."/>
            <person name="Wohldmann P."/>
            <person name="Pepin K."/>
            <person name="Nelson J."/>
            <person name="Korf I."/>
            <person name="Bedell J.A."/>
            <person name="Hillier L.W."/>
            <person name="Mardis E."/>
            <person name="Waterston R."/>
            <person name="Wilson R."/>
            <person name="Emanuel B.S."/>
            <person name="Shaikh T."/>
            <person name="Kurahashi H."/>
            <person name="Saitta S."/>
            <person name="Budarf M.L."/>
            <person name="McDermid H.E."/>
            <person name="Johnson A."/>
            <person name="Wong A.C.C."/>
            <person name="Morrow B.E."/>
            <person name="Edelmann L."/>
            <person name="Kim U.J."/>
            <person name="Shizuya H."/>
            <person name="Simon M.I."/>
            <person name="Dumanski J.P."/>
            <person name="Peyrard M."/>
            <person name="Kedra D."/>
            <person name="Seroussi E."/>
            <person name="Fransson I."/>
            <person name="Tapia I."/>
            <person name="Bruder C.E."/>
            <person name="O'Brien K.P."/>
            <person name="Wilkinson P."/>
            <person name="Bodenteich A."/>
            <person name="Hartman K."/>
            <person name="Hu X."/>
            <person name="Khan A.S."/>
            <person name="Lane L."/>
            <person name="Tilahun Y."/>
            <person name="Wright H."/>
        </authorList>
    </citation>
    <scope>NUCLEOTIDE SEQUENCE [LARGE SCALE GENOMIC DNA]</scope>
</reference>
<reference key="2">
    <citation type="journal article" date="2004" name="Genome Res.">
        <title>The status, quality, and expansion of the NIH full-length cDNA project: the Mammalian Gene Collection (MGC).</title>
        <authorList>
            <consortium name="The MGC Project Team"/>
        </authorList>
    </citation>
    <scope>NUCLEOTIDE SEQUENCE [LARGE SCALE MRNA]</scope>
</reference>
<gene>
    <name type="primary">POM121L1P</name>
    <name type="synonym">POM121L1</name>
</gene>
<feature type="chain" id="PRO_0000292038" description="Putative POM121-like protein 1">
    <location>
        <begin position="1"/>
        <end position="428"/>
    </location>
</feature>
<feature type="region of interest" description="Disordered" evidence="1">
    <location>
        <begin position="1"/>
        <end position="23"/>
    </location>
</feature>
<feature type="region of interest" description="Disordered" evidence="1">
    <location>
        <begin position="36"/>
        <end position="204"/>
    </location>
</feature>
<feature type="region of interest" description="Disordered" evidence="1">
    <location>
        <begin position="254"/>
        <end position="293"/>
    </location>
</feature>
<feature type="region of interest" description="Disordered" evidence="1">
    <location>
        <begin position="306"/>
        <end position="384"/>
    </location>
</feature>
<feature type="region of interest" description="Disordered" evidence="1">
    <location>
        <begin position="402"/>
        <end position="428"/>
    </location>
</feature>
<feature type="compositionally biased region" description="Basic and acidic residues" evidence="1">
    <location>
        <begin position="44"/>
        <end position="62"/>
    </location>
</feature>
<feature type="compositionally biased region" description="Low complexity" evidence="1">
    <location>
        <begin position="106"/>
        <end position="117"/>
    </location>
</feature>
<feature type="compositionally biased region" description="Polar residues" evidence="1">
    <location>
        <begin position="118"/>
        <end position="129"/>
    </location>
</feature>
<feature type="compositionally biased region" description="Polar residues" evidence="1">
    <location>
        <begin position="144"/>
        <end position="155"/>
    </location>
</feature>
<feature type="compositionally biased region" description="Polar residues" evidence="1">
    <location>
        <begin position="260"/>
        <end position="269"/>
    </location>
</feature>
<feature type="compositionally biased region" description="Polar residues" evidence="1">
    <location>
        <begin position="326"/>
        <end position="347"/>
    </location>
</feature>
<feature type="compositionally biased region" description="Polar residues" evidence="1">
    <location>
        <begin position="403"/>
        <end position="415"/>
    </location>
</feature>
<feature type="compositionally biased region" description="Low complexity" evidence="1">
    <location>
        <begin position="416"/>
        <end position="428"/>
    </location>
</feature>